<organism>
    <name type="scientific">Macrovipera lebetinus</name>
    <name type="common">Levantine viper</name>
    <name type="synonym">Vipera lebetina</name>
    <dbReference type="NCBI Taxonomy" id="3148341"/>
    <lineage>
        <taxon>Eukaryota</taxon>
        <taxon>Metazoa</taxon>
        <taxon>Chordata</taxon>
        <taxon>Craniata</taxon>
        <taxon>Vertebrata</taxon>
        <taxon>Euteleostomi</taxon>
        <taxon>Lepidosauria</taxon>
        <taxon>Squamata</taxon>
        <taxon>Bifurcata</taxon>
        <taxon>Unidentata</taxon>
        <taxon>Episquamata</taxon>
        <taxon>Toxicofera</taxon>
        <taxon>Serpentes</taxon>
        <taxon>Colubroidea</taxon>
        <taxon>Viperidae</taxon>
        <taxon>Viperinae</taxon>
        <taxon>Macrovipera</taxon>
    </lineage>
</organism>
<name>SLB3_MACLB</name>
<feature type="signal peptide" evidence="2">
    <location>
        <begin position="1"/>
        <end position="24"/>
    </location>
</feature>
<feature type="chain" id="PRO_0000356335" description="Snaclec B3/B5">
    <location>
        <begin position="25"/>
        <end position="148"/>
    </location>
</feature>
<feature type="domain" description="C-type lectin" evidence="3">
    <location>
        <begin position="34"/>
        <end position="145"/>
    </location>
</feature>
<feature type="disulfide bond" evidence="3">
    <location>
        <begin position="27"/>
        <end position="38"/>
    </location>
</feature>
<feature type="disulfide bond" evidence="3">
    <location>
        <begin position="55"/>
        <end position="144"/>
    </location>
</feature>
<feature type="disulfide bond" description="Interchain" evidence="3">
    <location>
        <position position="100"/>
    </location>
</feature>
<feature type="disulfide bond" evidence="3">
    <location>
        <begin position="121"/>
        <end position="136"/>
    </location>
</feature>
<evidence type="ECO:0000250" key="1"/>
<evidence type="ECO:0000255" key="2"/>
<evidence type="ECO:0000255" key="3">
    <source>
        <dbReference type="PROSITE-ProRule" id="PRU00040"/>
    </source>
</evidence>
<evidence type="ECO:0000305" key="4"/>
<keyword id="KW-1015">Disulfide bond</keyword>
<keyword id="KW-1199">Hemostasis impairing toxin</keyword>
<keyword id="KW-0964">Secreted</keyword>
<keyword id="KW-0732">Signal</keyword>
<keyword id="KW-0800">Toxin</keyword>
<reference key="1">
    <citation type="journal article" date="2009" name="Toxicon">
        <title>C-type lectin protein isoforms of Macrovipera lebetina: cDNA cloning and genetic diversity.</title>
        <authorList>
            <person name="Jebali J."/>
            <person name="Bazaa A."/>
            <person name="Sarray S."/>
            <person name="Benhaj K."/>
            <person name="Karboul A."/>
            <person name="El Ayeb M."/>
            <person name="Marrakchi N."/>
            <person name="Gargouri A."/>
        </authorList>
    </citation>
    <scope>NUCLEOTIDE SEQUENCE [MRNA]</scope>
</reference>
<accession>B4XT02</accession>
<protein>
    <recommendedName>
        <fullName>Snaclec B3/B5</fullName>
    </recommendedName>
    <alternativeName>
        <fullName>C-type lectin B3/B5</fullName>
    </alternativeName>
</protein>
<sequence>MGRFIFVSFGLLVVFLSLSGTGAALNCASGWSGYDQHCYKVFDKPKSWADAEKFCKKQTSGGHLVSFHSSEETDFVVKLVSQTLESQILWMGLSKVWNQCDWGWSNGAKLKYKAWAEESYCVYFSSTKKGWRSRACRLLGHFVCKSPA</sequence>
<proteinExistence type="evidence at transcript level"/>
<comment type="function">
    <text evidence="1">Interferes with one step of hemostasis (modulation of platelet aggregation, or coagulation cascade, for example).</text>
</comment>
<comment type="subunit">
    <text evidence="1">Heterodimer; disulfide-linked.</text>
</comment>
<comment type="subcellular location">
    <subcellularLocation>
        <location evidence="1">Secreted</location>
    </subcellularLocation>
</comment>
<comment type="tissue specificity">
    <text>Expressed by the venom gland.</text>
</comment>
<comment type="miscellaneous">
    <text>Shows greater sequence similarity to the beta than alpha subunits compared to other heterodimer snaclecs.</text>
</comment>
<comment type="similarity">
    <text evidence="4">Belongs to the snaclec family.</text>
</comment>
<dbReference type="EMBL" id="EU085464">
    <property type="protein sequence ID" value="ABW82674.1"/>
    <property type="molecule type" value="mRNA"/>
</dbReference>
<dbReference type="EMBL" id="EU085466">
    <property type="protein sequence ID" value="ABW82676.1"/>
    <property type="molecule type" value="mRNA"/>
</dbReference>
<dbReference type="SMR" id="B4XT02"/>
<dbReference type="GO" id="GO:0005576">
    <property type="term" value="C:extracellular region"/>
    <property type="evidence" value="ECO:0007669"/>
    <property type="project" value="UniProtKB-SubCell"/>
</dbReference>
<dbReference type="GO" id="GO:0090729">
    <property type="term" value="F:toxin activity"/>
    <property type="evidence" value="ECO:0007669"/>
    <property type="project" value="UniProtKB-KW"/>
</dbReference>
<dbReference type="FunFam" id="3.10.100.10:FF:000087">
    <property type="entry name" value="Snaclec rhodocetin subunit delta"/>
    <property type="match status" value="1"/>
</dbReference>
<dbReference type="Gene3D" id="3.10.100.10">
    <property type="entry name" value="Mannose-Binding Protein A, subunit A"/>
    <property type="match status" value="1"/>
</dbReference>
<dbReference type="InterPro" id="IPR001304">
    <property type="entry name" value="C-type_lectin-like"/>
</dbReference>
<dbReference type="InterPro" id="IPR016186">
    <property type="entry name" value="C-type_lectin-like/link_sf"/>
</dbReference>
<dbReference type="InterPro" id="IPR050111">
    <property type="entry name" value="C-type_lectin/snaclec_domain"/>
</dbReference>
<dbReference type="InterPro" id="IPR018378">
    <property type="entry name" value="C-type_lectin_CS"/>
</dbReference>
<dbReference type="InterPro" id="IPR016187">
    <property type="entry name" value="CTDL_fold"/>
</dbReference>
<dbReference type="PANTHER" id="PTHR22803">
    <property type="entry name" value="MANNOSE, PHOSPHOLIPASE, LECTIN RECEPTOR RELATED"/>
    <property type="match status" value="1"/>
</dbReference>
<dbReference type="Pfam" id="PF00059">
    <property type="entry name" value="Lectin_C"/>
    <property type="match status" value="1"/>
</dbReference>
<dbReference type="PRINTS" id="PR01504">
    <property type="entry name" value="PNCREATITSAP"/>
</dbReference>
<dbReference type="SMART" id="SM00034">
    <property type="entry name" value="CLECT"/>
    <property type="match status" value="1"/>
</dbReference>
<dbReference type="SUPFAM" id="SSF56436">
    <property type="entry name" value="C-type lectin-like"/>
    <property type="match status" value="1"/>
</dbReference>
<dbReference type="PROSITE" id="PS00615">
    <property type="entry name" value="C_TYPE_LECTIN_1"/>
    <property type="match status" value="1"/>
</dbReference>
<dbReference type="PROSITE" id="PS50041">
    <property type="entry name" value="C_TYPE_LECTIN_2"/>
    <property type="match status" value="1"/>
</dbReference>